<feature type="chain" id="PRO_0000421034" description="Serine/threonine-protein kinase GRIK1">
    <location>
        <begin position="1"/>
        <end position="396"/>
    </location>
</feature>
<feature type="domain" description="Protein kinase" evidence="2">
    <location>
        <begin position="108"/>
        <end position="369"/>
    </location>
</feature>
<feature type="region of interest" description="Disordered" evidence="4">
    <location>
        <begin position="22"/>
        <end position="65"/>
    </location>
</feature>
<feature type="compositionally biased region" description="Acidic residues" evidence="4">
    <location>
        <begin position="48"/>
        <end position="60"/>
    </location>
</feature>
<feature type="active site" description="Proton acceptor" evidence="2 3">
    <location>
        <position position="239"/>
    </location>
</feature>
<feature type="binding site" evidence="2">
    <location>
        <begin position="114"/>
        <end position="122"/>
    </location>
    <ligand>
        <name>ATP</name>
        <dbReference type="ChEBI" id="CHEBI:30616"/>
    </ligand>
</feature>
<feature type="binding site" evidence="10">
    <location>
        <position position="137"/>
    </location>
    <ligand>
        <name>ATP</name>
        <dbReference type="ChEBI" id="CHEBI:30616"/>
    </ligand>
</feature>
<feature type="modified residue" description="Phosphothreonine; by autocatalysis" evidence="9">
    <location>
        <position position="154"/>
    </location>
</feature>
<feature type="modified residue" description="Phosphoserine; by KIN10" evidence="9">
    <location>
        <position position="261"/>
    </location>
</feature>
<feature type="mutagenesis site" description="Abolishes autophosphorylation." evidence="8">
    <original>K</original>
    <variation>A</variation>
    <location>
        <position position="137"/>
    </location>
</feature>
<sequence>MFCDSFAFAQVMSCFGCFGGSERSRHSPNPYDDDTYSHDSGETSNPGGDDEEGEEEEEVEELSRSKRSEEILKCKLQNGLVCRQFPVKETNKLTRGEDEDGNKTINEFVRERKIGSGSYGKVVLYRSTVDDKHYAIKAFHKSHLSRLRVAPSETAMGDVLREVMIMKTLEHPNIVNLIEVIDDPEFDDFYMVLEYVDGKWAYDDSGPPGALGEITARKYLRDVVAGLMYLHAHNVIHGDIKPDNLLVTSTGRVKIGDFSVSQVFKDDDDQLRRSPGTPVFTAPECCLGITYSGRSADTWAVGVTLYCMILGQYPFLGDTLQDTYDKIVHNPLIIPEGLNPRLRDLIEGLLCKDPNQRMTLKAVAEHPWITGEDGAISEYCCWCKRKAEEEEDQNHS</sequence>
<keyword id="KW-0025">Alternative splicing</keyword>
<keyword id="KW-0067">ATP-binding</keyword>
<keyword id="KW-0963">Cytoplasm</keyword>
<keyword id="KW-0945">Host-virus interaction</keyword>
<keyword id="KW-0418">Kinase</keyword>
<keyword id="KW-0547">Nucleotide-binding</keyword>
<keyword id="KW-0539">Nucleus</keyword>
<keyword id="KW-0597">Phosphoprotein</keyword>
<keyword id="KW-1185">Reference proteome</keyword>
<keyword id="KW-0723">Serine/threonine-protein kinase</keyword>
<keyword id="KW-0808">Transferase</keyword>
<evidence type="ECO:0000250" key="1"/>
<evidence type="ECO:0000255" key="2">
    <source>
        <dbReference type="PROSITE-ProRule" id="PRU00159"/>
    </source>
</evidence>
<evidence type="ECO:0000255" key="3">
    <source>
        <dbReference type="PROSITE-ProRule" id="PRU10027"/>
    </source>
</evidence>
<evidence type="ECO:0000256" key="4">
    <source>
        <dbReference type="SAM" id="MobiDB-lite"/>
    </source>
</evidence>
<evidence type="ECO:0000269" key="5">
    <source>
    </source>
</evidence>
<evidence type="ECO:0000269" key="6">
    <source>
    </source>
</evidence>
<evidence type="ECO:0000269" key="7">
    <source>
    </source>
</evidence>
<evidence type="ECO:0000269" key="8">
    <source>
    </source>
</evidence>
<evidence type="ECO:0000269" key="9">
    <source>
    </source>
</evidence>
<evidence type="ECO:0000305" key="10"/>
<organism>
    <name type="scientific">Arabidopsis thaliana</name>
    <name type="common">Mouse-ear cress</name>
    <dbReference type="NCBI Taxonomy" id="3702"/>
    <lineage>
        <taxon>Eukaryota</taxon>
        <taxon>Viridiplantae</taxon>
        <taxon>Streptophyta</taxon>
        <taxon>Embryophyta</taxon>
        <taxon>Tracheophyta</taxon>
        <taxon>Spermatophyta</taxon>
        <taxon>Magnoliopsida</taxon>
        <taxon>eudicotyledons</taxon>
        <taxon>Gunneridae</taxon>
        <taxon>Pentapetalae</taxon>
        <taxon>rosids</taxon>
        <taxon>malvids</taxon>
        <taxon>Brassicales</taxon>
        <taxon>Brassicaceae</taxon>
        <taxon>Camelineae</taxon>
        <taxon>Arabidopsis</taxon>
    </lineage>
</organism>
<proteinExistence type="evidence at protein level"/>
<reference key="1">
    <citation type="journal article" date="2007" name="J. Biol. Chem.">
        <title>DNA sequences from Arabidopsis, which encode protein kinases and function as upstream regulators of Snf1 in yeast.</title>
        <authorList>
            <person name="Hey S.J."/>
            <person name="Mayerhofer H."/>
            <person name="Halford N.G."/>
            <person name="Dickinson J.R."/>
        </authorList>
    </citation>
    <scope>NUCLEOTIDE SEQUENCE [MRNA]</scope>
    <scope>FUNCTION</scope>
    <source>
        <tissue>Seedling</tissue>
    </source>
</reference>
<reference key="2">
    <citation type="journal article" date="2000" name="Nature">
        <title>Sequence and analysis of chromosome 3 of the plant Arabidopsis thaliana.</title>
        <authorList>
            <person name="Salanoubat M."/>
            <person name="Lemcke K."/>
            <person name="Rieger M."/>
            <person name="Ansorge W."/>
            <person name="Unseld M."/>
            <person name="Fartmann B."/>
            <person name="Valle G."/>
            <person name="Bloecker H."/>
            <person name="Perez-Alonso M."/>
            <person name="Obermaier B."/>
            <person name="Delseny M."/>
            <person name="Boutry M."/>
            <person name="Grivell L.A."/>
            <person name="Mache R."/>
            <person name="Puigdomenech P."/>
            <person name="De Simone V."/>
            <person name="Choisne N."/>
            <person name="Artiguenave F."/>
            <person name="Robert C."/>
            <person name="Brottier P."/>
            <person name="Wincker P."/>
            <person name="Cattolico L."/>
            <person name="Weissenbach J."/>
            <person name="Saurin W."/>
            <person name="Quetier F."/>
            <person name="Schaefer M."/>
            <person name="Mueller-Auer S."/>
            <person name="Gabel C."/>
            <person name="Fuchs M."/>
            <person name="Benes V."/>
            <person name="Wurmbach E."/>
            <person name="Drzonek H."/>
            <person name="Erfle H."/>
            <person name="Jordan N."/>
            <person name="Bangert S."/>
            <person name="Wiedelmann R."/>
            <person name="Kranz H."/>
            <person name="Voss H."/>
            <person name="Holland R."/>
            <person name="Brandt P."/>
            <person name="Nyakatura G."/>
            <person name="Vezzi A."/>
            <person name="D'Angelo M."/>
            <person name="Pallavicini A."/>
            <person name="Toppo S."/>
            <person name="Simionati B."/>
            <person name="Conrad A."/>
            <person name="Hornischer K."/>
            <person name="Kauer G."/>
            <person name="Loehnert T.-H."/>
            <person name="Nordsiek G."/>
            <person name="Reichelt J."/>
            <person name="Scharfe M."/>
            <person name="Schoen O."/>
            <person name="Bargues M."/>
            <person name="Terol J."/>
            <person name="Climent J."/>
            <person name="Navarro P."/>
            <person name="Collado C."/>
            <person name="Perez-Perez A."/>
            <person name="Ottenwaelder B."/>
            <person name="Duchemin D."/>
            <person name="Cooke R."/>
            <person name="Laudie M."/>
            <person name="Berger-Llauro C."/>
            <person name="Purnelle B."/>
            <person name="Masuy D."/>
            <person name="de Haan M."/>
            <person name="Maarse A.C."/>
            <person name="Alcaraz J.-P."/>
            <person name="Cottet A."/>
            <person name="Casacuberta E."/>
            <person name="Monfort A."/>
            <person name="Argiriou A."/>
            <person name="Flores M."/>
            <person name="Liguori R."/>
            <person name="Vitale D."/>
            <person name="Mannhaupt G."/>
            <person name="Haase D."/>
            <person name="Schoof H."/>
            <person name="Rudd S."/>
            <person name="Zaccaria P."/>
            <person name="Mewes H.-W."/>
            <person name="Mayer K.F.X."/>
            <person name="Kaul S."/>
            <person name="Town C.D."/>
            <person name="Koo H.L."/>
            <person name="Tallon L.J."/>
            <person name="Jenkins J."/>
            <person name="Rooney T."/>
            <person name="Rizzo M."/>
            <person name="Walts A."/>
            <person name="Utterback T."/>
            <person name="Fujii C.Y."/>
            <person name="Shea T.P."/>
            <person name="Creasy T.H."/>
            <person name="Haas B."/>
            <person name="Maiti R."/>
            <person name="Wu D."/>
            <person name="Peterson J."/>
            <person name="Van Aken S."/>
            <person name="Pai G."/>
            <person name="Militscher J."/>
            <person name="Sellers P."/>
            <person name="Gill J.E."/>
            <person name="Feldblyum T.V."/>
            <person name="Preuss D."/>
            <person name="Lin X."/>
            <person name="Nierman W.C."/>
            <person name="Salzberg S.L."/>
            <person name="White O."/>
            <person name="Venter J.C."/>
            <person name="Fraser C.M."/>
            <person name="Kaneko T."/>
            <person name="Nakamura Y."/>
            <person name="Sato S."/>
            <person name="Kato T."/>
            <person name="Asamizu E."/>
            <person name="Sasamoto S."/>
            <person name="Kimura T."/>
            <person name="Idesawa K."/>
            <person name="Kawashima K."/>
            <person name="Kishida Y."/>
            <person name="Kiyokawa C."/>
            <person name="Kohara M."/>
            <person name="Matsumoto M."/>
            <person name="Matsuno A."/>
            <person name="Muraki A."/>
            <person name="Nakayama S."/>
            <person name="Nakazaki N."/>
            <person name="Shinpo S."/>
            <person name="Takeuchi C."/>
            <person name="Wada T."/>
            <person name="Watanabe A."/>
            <person name="Yamada M."/>
            <person name="Yasuda M."/>
            <person name="Tabata S."/>
        </authorList>
    </citation>
    <scope>NUCLEOTIDE SEQUENCE [LARGE SCALE GENOMIC DNA]</scope>
    <source>
        <strain>cv. Columbia</strain>
    </source>
</reference>
<reference key="3">
    <citation type="journal article" date="2017" name="Plant J.">
        <title>Araport11: a complete reannotation of the Arabidopsis thaliana reference genome.</title>
        <authorList>
            <person name="Cheng C.Y."/>
            <person name="Krishnakumar V."/>
            <person name="Chan A.P."/>
            <person name="Thibaud-Nissen F."/>
            <person name="Schobel S."/>
            <person name="Town C.D."/>
        </authorList>
    </citation>
    <scope>GENOME REANNOTATION</scope>
    <source>
        <strain>cv. Columbia</strain>
    </source>
</reference>
<reference key="4">
    <citation type="journal article" date="2003" name="Science">
        <title>Empirical analysis of transcriptional activity in the Arabidopsis genome.</title>
        <authorList>
            <person name="Yamada K."/>
            <person name="Lim J."/>
            <person name="Dale J.M."/>
            <person name="Chen H."/>
            <person name="Shinn P."/>
            <person name="Palm C.J."/>
            <person name="Southwick A.M."/>
            <person name="Wu H.C."/>
            <person name="Kim C.J."/>
            <person name="Nguyen M."/>
            <person name="Pham P.K."/>
            <person name="Cheuk R.F."/>
            <person name="Karlin-Newmann G."/>
            <person name="Liu S.X."/>
            <person name="Lam B."/>
            <person name="Sakano H."/>
            <person name="Wu T."/>
            <person name="Yu G."/>
            <person name="Miranda M."/>
            <person name="Quach H.L."/>
            <person name="Tripp M."/>
            <person name="Chang C.H."/>
            <person name="Lee J.M."/>
            <person name="Toriumi M.J."/>
            <person name="Chan M.M."/>
            <person name="Tang C.C."/>
            <person name="Onodera C.S."/>
            <person name="Deng J.M."/>
            <person name="Akiyama K."/>
            <person name="Ansari Y."/>
            <person name="Arakawa T."/>
            <person name="Banh J."/>
            <person name="Banno F."/>
            <person name="Bowser L."/>
            <person name="Brooks S.Y."/>
            <person name="Carninci P."/>
            <person name="Chao Q."/>
            <person name="Choy N."/>
            <person name="Enju A."/>
            <person name="Goldsmith A.D."/>
            <person name="Gurjal M."/>
            <person name="Hansen N.F."/>
            <person name="Hayashizaki Y."/>
            <person name="Johnson-Hopson C."/>
            <person name="Hsuan V.W."/>
            <person name="Iida K."/>
            <person name="Karnes M."/>
            <person name="Khan S."/>
            <person name="Koesema E."/>
            <person name="Ishida J."/>
            <person name="Jiang P.X."/>
            <person name="Jones T."/>
            <person name="Kawai J."/>
            <person name="Kamiya A."/>
            <person name="Meyers C."/>
            <person name="Nakajima M."/>
            <person name="Narusaka M."/>
            <person name="Seki M."/>
            <person name="Sakurai T."/>
            <person name="Satou M."/>
            <person name="Tamse R."/>
            <person name="Vaysberg M."/>
            <person name="Wallender E.K."/>
            <person name="Wong C."/>
            <person name="Yamamura Y."/>
            <person name="Yuan S."/>
            <person name="Shinozaki K."/>
            <person name="Davis R.W."/>
            <person name="Theologis A."/>
            <person name="Ecker J.R."/>
        </authorList>
    </citation>
    <scope>NUCLEOTIDE SEQUENCE [LARGE SCALE MRNA]</scope>
    <source>
        <strain>cv. Columbia</strain>
    </source>
</reference>
<reference key="5">
    <citation type="journal article" date="2002" name="Plant Cell">
        <title>A geminivirus replication protein interacts with a protein kinase and a motor protein that display different expression patterns during plant development and infection.</title>
        <authorList>
            <person name="Kong L.-J."/>
            <person name="Hanley-Bowdoin L."/>
        </authorList>
    </citation>
    <scope>INTERACTION WITH GEMINIVIRUS AL1</scope>
    <scope>AUTOPHOSPHORYLATION</scope>
    <scope>FUNCTION</scope>
    <scope>SUBCELLULAR LOCATION</scope>
    <scope>INDUCTION</scope>
    <scope>DEVELOPMENTAL STAGE</scope>
</reference>
<reference key="6">
    <citation type="journal article" date="2006" name="Plant Physiol.">
        <title>Geminivirus infection up-regulates the expression of two Arabidopsis protein kinases related to yeast SNF1- and mammalian AMPK-activating kinases.</title>
        <authorList>
            <person name="Shen W."/>
            <person name="Hanley-Bowdoin L."/>
        </authorList>
    </citation>
    <scope>FUNCTION</scope>
    <scope>INTERACTION WITH GEMINIVIRUS AL1</scope>
    <scope>INDUCTION</scope>
    <scope>DEVELOPMENTAL STAGE</scope>
    <scope>TISSUE SPECIFICITY</scope>
</reference>
<reference key="7">
    <citation type="journal article" date="2009" name="Plant Physiol.">
        <title>Arabidopsis protein kinases GRIK1 and GRIK2 specifically activate SnRK1 by phosphorylating its activation loop.</title>
        <authorList>
            <person name="Shen W."/>
            <person name="Reyes M.I."/>
            <person name="Hanley-Bowdoin L."/>
        </authorList>
    </citation>
    <scope>FUNCTION</scope>
    <scope>AUTOPHOSPHORYLATION</scope>
    <scope>MUTAGENESIS OF LYS-137</scope>
    <scope>INDUCTION</scope>
    <scope>DEVELOPMENTAL STAGE</scope>
</reference>
<reference key="8">
    <citation type="journal article" date="2010" name="J. Biol. Chem.">
        <title>Cross-phosphorylation between Arabidopsis thaliana sucrose nonfermenting 1-related protein kinase 1 (AtSnRK1) and its activating kinase (AtSnAK) determines their catalytic activities.</title>
        <authorList>
            <person name="Crozet P."/>
            <person name="Jammes F."/>
            <person name="Valot B."/>
            <person name="Ambard-Bretteville F."/>
            <person name="Nessler S."/>
            <person name="Hodges M."/>
            <person name="Vidal J."/>
            <person name="Thomas M."/>
        </authorList>
    </citation>
    <scope>FUNCTION</scope>
    <scope>AUTOPHOSPHORYLATION</scope>
    <scope>PHOSPHORYLATION AT THR-154 AND SER-261</scope>
    <scope>ACTIVITY REGULATION</scope>
</reference>
<accession>Q93V58</accession>
<accession>Q9M1T5</accession>
<comment type="function">
    <text evidence="5 6 7 8 9">Activates SnRK1.1/KIN10 and SnRK1.2/KIN11 by phosphorylation of their activation-loop 'Thr-198' and 'Thr-176', respectively. Required for the regulation by SnRK1 kinases of the transcription of a large set of genes, the modification the activity of metabolic enzymes, and the control of various nutrient-responsive cellular developmental processes.</text>
</comment>
<comment type="catalytic activity">
    <reaction>
        <text>L-seryl-[protein] + ATP = O-phospho-L-seryl-[protein] + ADP + H(+)</text>
        <dbReference type="Rhea" id="RHEA:17989"/>
        <dbReference type="Rhea" id="RHEA-COMP:9863"/>
        <dbReference type="Rhea" id="RHEA-COMP:11604"/>
        <dbReference type="ChEBI" id="CHEBI:15378"/>
        <dbReference type="ChEBI" id="CHEBI:29999"/>
        <dbReference type="ChEBI" id="CHEBI:30616"/>
        <dbReference type="ChEBI" id="CHEBI:83421"/>
        <dbReference type="ChEBI" id="CHEBI:456216"/>
        <dbReference type="EC" id="2.7.11.1"/>
    </reaction>
</comment>
<comment type="catalytic activity">
    <reaction>
        <text>L-threonyl-[protein] + ATP = O-phospho-L-threonyl-[protein] + ADP + H(+)</text>
        <dbReference type="Rhea" id="RHEA:46608"/>
        <dbReference type="Rhea" id="RHEA-COMP:11060"/>
        <dbReference type="Rhea" id="RHEA-COMP:11605"/>
        <dbReference type="ChEBI" id="CHEBI:15378"/>
        <dbReference type="ChEBI" id="CHEBI:30013"/>
        <dbReference type="ChEBI" id="CHEBI:30616"/>
        <dbReference type="ChEBI" id="CHEBI:61977"/>
        <dbReference type="ChEBI" id="CHEBI:456216"/>
        <dbReference type="EC" id="2.7.11.1"/>
    </reaction>
</comment>
<comment type="activity regulation">
    <text evidence="9">Activated when autophosphorylated at Thr-154 and inactivated when phosphorylated at Ser-261 by SnRK1.1/KIN10.</text>
</comment>
<comment type="subunit">
    <text evidence="1 5 6">Associates with the SNF1-related protein kinase (SnRK) complex (By similarity). Interacts with AL1, a geminivirus (TGMV) protein essential for viral replication.</text>
</comment>
<comment type="interaction">
    <interactant intactId="EBI-6399184">
        <id>Q93V58</id>
    </interactant>
    <interactant intactId="EBI-20798606">
        <id>Q38997-2</id>
        <label>KIN10</label>
    </interactant>
    <organismsDiffer>false</organismsDiffer>
    <experiments>2</experiments>
</comment>
<comment type="subcellular location">
    <subcellularLocation>
        <location evidence="5">Cytoplasm</location>
    </subcellularLocation>
    <subcellularLocation>
        <location evidence="5">Nucleus</location>
    </subcellularLocation>
    <text>Restricted to the nucleus in cells infected by geminivirus.</text>
</comment>
<comment type="alternative products">
    <event type="alternative splicing"/>
    <isoform>
        <id>Q93V58-1</id>
        <name>1</name>
        <sequence type="displayed"/>
    </isoform>
    <text>A number of isoforms are produced. According to EST sequences.</text>
</comment>
<comment type="tissue specificity">
    <text evidence="6">Expressed in shoot apical meristem, leaf primordium and emerging petiole (at protein level).</text>
</comment>
<comment type="developmental stage">
    <text evidence="5 6 8">Highly expressed in young leaf and floral tissues but not expressed in mature tissues (at protein level).</text>
</comment>
<comment type="induction">
    <text evidence="5 6 8">By geminivirus (TGMV, CaLCuV or BCTV) infection (at the protein level).</text>
</comment>
<comment type="miscellaneous">
    <text>Functionally able to complement the yeast elm1 sak1 tos3 triple mutant.</text>
</comment>
<comment type="similarity">
    <text evidence="2">Belongs to the protein kinase superfamily. Ser/Thr protein kinase family.</text>
</comment>
<comment type="sequence caution" evidence="10">
    <conflict type="erroneous gene model prediction">
        <sequence resource="EMBL-CDS" id="CAB72162"/>
    </conflict>
</comment>
<dbReference type="EC" id="2.7.11.1"/>
<dbReference type="EMBL" id="AM489731">
    <property type="protein sequence ID" value="CAM32015.1"/>
    <property type="molecule type" value="mRNA"/>
</dbReference>
<dbReference type="EMBL" id="AL132953">
    <property type="status" value="NOT_ANNOTATED_CDS"/>
    <property type="molecule type" value="Genomic_DNA"/>
</dbReference>
<dbReference type="EMBL" id="AL138649">
    <property type="protein sequence ID" value="CAB72162.1"/>
    <property type="status" value="ALT_SEQ"/>
    <property type="molecule type" value="Genomic_DNA"/>
</dbReference>
<dbReference type="EMBL" id="CP002686">
    <property type="protein sequence ID" value="AEE78007.1"/>
    <property type="molecule type" value="Genomic_DNA"/>
</dbReference>
<dbReference type="EMBL" id="CP002686">
    <property type="protein sequence ID" value="AEE78008.1"/>
    <property type="molecule type" value="Genomic_DNA"/>
</dbReference>
<dbReference type="EMBL" id="AY035070">
    <property type="protein sequence ID" value="AAK59575.1"/>
    <property type="molecule type" value="mRNA"/>
</dbReference>
<dbReference type="EMBL" id="AY056309">
    <property type="protein sequence ID" value="AAL07158.1"/>
    <property type="molecule type" value="mRNA"/>
</dbReference>
<dbReference type="PIR" id="T47464">
    <property type="entry name" value="T47464"/>
</dbReference>
<dbReference type="RefSeq" id="NP_001030811.1">
    <molecule id="Q93V58-1"/>
    <property type="nucleotide sequence ID" value="NM_001035734.2"/>
</dbReference>
<dbReference type="RefSeq" id="NP_566876.3">
    <molecule id="Q93V58-1"/>
    <property type="nucleotide sequence ID" value="NM_114393.4"/>
</dbReference>
<dbReference type="SMR" id="Q93V58"/>
<dbReference type="BioGRID" id="8980">
    <property type="interactions" value="8"/>
</dbReference>
<dbReference type="FunCoup" id="Q93V58">
    <property type="interactions" value="1588"/>
</dbReference>
<dbReference type="IntAct" id="Q93V58">
    <property type="interactions" value="3"/>
</dbReference>
<dbReference type="STRING" id="3702.Q93V58"/>
<dbReference type="iPTMnet" id="Q93V58"/>
<dbReference type="SwissPalm" id="Q93V58"/>
<dbReference type="PaxDb" id="3702-AT3G45240.1"/>
<dbReference type="ProteomicsDB" id="247219">
    <molecule id="Q93V58-1"/>
</dbReference>
<dbReference type="EnsemblPlants" id="AT3G45240.1">
    <molecule id="Q93V58-1"/>
    <property type="protein sequence ID" value="AT3G45240.1"/>
    <property type="gene ID" value="AT3G45240"/>
</dbReference>
<dbReference type="EnsemblPlants" id="AT3G45240.2">
    <molecule id="Q93V58-1"/>
    <property type="protein sequence ID" value="AT3G45240.2"/>
    <property type="gene ID" value="AT3G45240"/>
</dbReference>
<dbReference type="GeneID" id="823660"/>
<dbReference type="Gramene" id="AT3G45240.1">
    <molecule id="Q93V58-1"/>
    <property type="protein sequence ID" value="AT3G45240.1"/>
    <property type="gene ID" value="AT3G45240"/>
</dbReference>
<dbReference type="Gramene" id="AT3G45240.2">
    <molecule id="Q93V58-1"/>
    <property type="protein sequence ID" value="AT3G45240.2"/>
    <property type="gene ID" value="AT3G45240"/>
</dbReference>
<dbReference type="KEGG" id="ath:AT3G45240"/>
<dbReference type="Araport" id="AT3G45240"/>
<dbReference type="TAIR" id="AT3G45240">
    <property type="gene designation" value="GRIK1"/>
</dbReference>
<dbReference type="eggNOG" id="KOG0585">
    <property type="taxonomic scope" value="Eukaryota"/>
</dbReference>
<dbReference type="InParanoid" id="Q93V58"/>
<dbReference type="OMA" id="PECCNGA"/>
<dbReference type="PhylomeDB" id="Q93V58"/>
<dbReference type="PRO" id="PR:Q93V58"/>
<dbReference type="Proteomes" id="UP000006548">
    <property type="component" value="Chromosome 3"/>
</dbReference>
<dbReference type="ExpressionAtlas" id="Q93V58">
    <property type="expression patterns" value="baseline and differential"/>
</dbReference>
<dbReference type="GO" id="GO:0005737">
    <property type="term" value="C:cytoplasm"/>
    <property type="evidence" value="ECO:0007669"/>
    <property type="project" value="UniProtKB-SubCell"/>
</dbReference>
<dbReference type="GO" id="GO:0005634">
    <property type="term" value="C:nucleus"/>
    <property type="evidence" value="ECO:0007669"/>
    <property type="project" value="UniProtKB-SubCell"/>
</dbReference>
<dbReference type="GO" id="GO:0005524">
    <property type="term" value="F:ATP binding"/>
    <property type="evidence" value="ECO:0007669"/>
    <property type="project" value="UniProtKB-KW"/>
</dbReference>
<dbReference type="GO" id="GO:0016301">
    <property type="term" value="F:kinase activity"/>
    <property type="evidence" value="ECO:0000314"/>
    <property type="project" value="UniProtKB"/>
</dbReference>
<dbReference type="GO" id="GO:0106310">
    <property type="term" value="F:protein serine kinase activity"/>
    <property type="evidence" value="ECO:0007669"/>
    <property type="project" value="RHEA"/>
</dbReference>
<dbReference type="GO" id="GO:0004674">
    <property type="term" value="F:protein serine/threonine kinase activity"/>
    <property type="evidence" value="ECO:0000314"/>
    <property type="project" value="UniProtKB"/>
</dbReference>
<dbReference type="GO" id="GO:0046777">
    <property type="term" value="P:protein autophosphorylation"/>
    <property type="evidence" value="ECO:0000314"/>
    <property type="project" value="UniProtKB"/>
</dbReference>
<dbReference type="GO" id="GO:0006468">
    <property type="term" value="P:protein phosphorylation"/>
    <property type="evidence" value="ECO:0000314"/>
    <property type="project" value="UniProtKB"/>
</dbReference>
<dbReference type="GO" id="GO:0009615">
    <property type="term" value="P:response to virus"/>
    <property type="evidence" value="ECO:0000270"/>
    <property type="project" value="UniProtKB"/>
</dbReference>
<dbReference type="CDD" id="cd14008">
    <property type="entry name" value="STKc_LKB1_CaMKK"/>
    <property type="match status" value="1"/>
</dbReference>
<dbReference type="FunFam" id="1.10.510.10:FF:000747">
    <property type="entry name" value="Serine/threonine-protein kinase GRIK2"/>
    <property type="match status" value="1"/>
</dbReference>
<dbReference type="FunFam" id="3.30.200.20:FF:000206">
    <property type="entry name" value="Serine/threonine-protein kinase Ssp1"/>
    <property type="match status" value="1"/>
</dbReference>
<dbReference type="Gene3D" id="1.10.510.10">
    <property type="entry name" value="Transferase(Phosphotransferase) domain 1"/>
    <property type="match status" value="1"/>
</dbReference>
<dbReference type="InterPro" id="IPR011009">
    <property type="entry name" value="Kinase-like_dom_sf"/>
</dbReference>
<dbReference type="InterPro" id="IPR000719">
    <property type="entry name" value="Prot_kinase_dom"/>
</dbReference>
<dbReference type="InterPro" id="IPR017441">
    <property type="entry name" value="Protein_kinase_ATP_BS"/>
</dbReference>
<dbReference type="InterPro" id="IPR008271">
    <property type="entry name" value="Ser/Thr_kinase_AS"/>
</dbReference>
<dbReference type="PANTHER" id="PTHR24346">
    <property type="entry name" value="MAP/MICROTUBULE AFFINITY-REGULATING KINASE"/>
    <property type="match status" value="1"/>
</dbReference>
<dbReference type="PANTHER" id="PTHR24346:SF39">
    <property type="entry name" value="SERINE_THREONINE-PROTEIN KINASE GRIK1-RELATED"/>
    <property type="match status" value="1"/>
</dbReference>
<dbReference type="Pfam" id="PF00069">
    <property type="entry name" value="Pkinase"/>
    <property type="match status" value="1"/>
</dbReference>
<dbReference type="SMART" id="SM00220">
    <property type="entry name" value="S_TKc"/>
    <property type="match status" value="1"/>
</dbReference>
<dbReference type="SUPFAM" id="SSF56112">
    <property type="entry name" value="Protein kinase-like (PK-like)"/>
    <property type="match status" value="1"/>
</dbReference>
<dbReference type="PROSITE" id="PS00107">
    <property type="entry name" value="PROTEIN_KINASE_ATP"/>
    <property type="match status" value="1"/>
</dbReference>
<dbReference type="PROSITE" id="PS50011">
    <property type="entry name" value="PROTEIN_KINASE_DOM"/>
    <property type="match status" value="1"/>
</dbReference>
<dbReference type="PROSITE" id="PS00108">
    <property type="entry name" value="PROTEIN_KINASE_ST"/>
    <property type="match status" value="1"/>
</dbReference>
<gene>
    <name type="primary">GRIK1</name>
    <name type="synonym">SNAK2</name>
    <name type="ordered locus">At3g45240</name>
    <name type="ORF">F18N11</name>
    <name type="ORF">T14D3.180</name>
</gene>
<name>GRIK1_ARATH</name>
<protein>
    <recommendedName>
        <fullName>Serine/threonine-protein kinase GRIK1</fullName>
        <ecNumber>2.7.11.1</ecNumber>
    </recommendedName>
    <alternativeName>
        <fullName>Protein GEMINIVIRUS REP INTERACTING KINASE 1</fullName>
        <shortName>Protein GRIK1</shortName>
    </alternativeName>
    <alternativeName>
        <fullName>SnRK1-activating protein kinase 2</fullName>
        <shortName>AtSnAK2</shortName>
    </alternativeName>
</protein>